<sequence>MNGEADCPTDLEMAAPKGQDRWSQEDMLTLLECMKNNLPSNDSSKFKTTESHMDWEKVAFKDFSGDMCKLKWVEISNEVRKFRTLTELILDAQEHVKNPYKGKKLKKHPDFPKKPLTPYFRFFMEKRAKYAKLHPEMSNLDLTKILSKKYKELPEKKKMKYIQDFQREKQEFERNLARFREDHPDLIQNAKKSDIPEKPKTPQQLWYTHEKKVYLKVRPDATTKEVKDSLGKQWSQLSDKKTLKWIHKALEQRKEYEEIMRDYIQKHPELNISEEGITKSTLTKAERQLKDKFDGRPTKPPPNSYSLYCAELMANMKDVPSTERMVLCSQQWKLLSQKEKDAYHKKCDQKKKDYEVELLRFLESLPEEEQQRVLGEEKMLNINKKQTTSPASKKPSQEGGKGGSEKPKRPVSAMFIFSEEKRRQLQEERPELSESELTRLLARMWNDLTEKKKAKYKAREAALKAQSERKPGGEREDRGKLPESPKRAEEIWQQSVIGDYLARFKNDRVKALKAMEMTWNNMEKKEKLMWIKKAAEDQKRYERELSEMRAPPAATNSSKKMKFQGEPKKPPMNGYQKFSQELLSNGELNHLPLKERMVEIGSRWQRISQSQKEHYKKLAEEQQRQYKVHLDLWVKSLSPQDRAAYKEYISNKRKNMTKLRGPNPKSSRTTLQSKSESEEDDDEEEEDDEEEEEEEEDDENGDSSEDGGDSSESSSEDESEDGDENDDDDDDEDDEDDDDEDEDNESEGSSSSSSSSGDSSDSGSN</sequence>
<protein>
    <recommendedName>
        <fullName>Nucleolar transcription factor 1</fullName>
    </recommendedName>
    <alternativeName>
        <fullName>Upstream-binding factor 1</fullName>
        <shortName>UBF-1</shortName>
    </alternativeName>
</protein>
<dbReference type="EMBL" id="X60831">
    <property type="protein sequence ID" value="CAA43222.1"/>
    <property type="molecule type" value="mRNA"/>
</dbReference>
<dbReference type="PIR" id="S22314">
    <property type="entry name" value="S22314"/>
</dbReference>
<dbReference type="PDB" id="1V63">
    <property type="method" value="NMR"/>
    <property type="chains" value="A=567-654"/>
</dbReference>
<dbReference type="PDB" id="1V64">
    <property type="method" value="NMR"/>
    <property type="chains" value="A=288-382"/>
</dbReference>
<dbReference type="PDB" id="1WGF">
    <property type="method" value="NMR"/>
    <property type="chains" value="A=394-470"/>
</dbReference>
<dbReference type="PDBsum" id="1V63"/>
<dbReference type="PDBsum" id="1V64"/>
<dbReference type="PDBsum" id="1WGF"/>
<dbReference type="BMRB" id="P25976"/>
<dbReference type="SMR" id="P25976"/>
<dbReference type="DIP" id="DIP-29977N"/>
<dbReference type="ELM" id="P25976"/>
<dbReference type="FunCoup" id="P25976">
    <property type="interactions" value="3294"/>
</dbReference>
<dbReference type="IntAct" id="P25976">
    <property type="interactions" value="10"/>
</dbReference>
<dbReference type="MINT" id="P25976"/>
<dbReference type="STRING" id="10090.ENSMUSP00000133844"/>
<dbReference type="GlyGen" id="P25976">
    <property type="glycosylation" value="2 sites, 1 N-linked glycan (1 site), 1 O-linked glycan (1 site)"/>
</dbReference>
<dbReference type="iPTMnet" id="P25976"/>
<dbReference type="PhosphoSitePlus" id="P25976"/>
<dbReference type="jPOST" id="P25976"/>
<dbReference type="PaxDb" id="10090-ENSMUSP00000133844"/>
<dbReference type="PeptideAtlas" id="P25976"/>
<dbReference type="ProteomicsDB" id="298449">
    <molecule id="P25976-1"/>
</dbReference>
<dbReference type="ProteomicsDB" id="298450">
    <molecule id="P25976-2"/>
</dbReference>
<dbReference type="Pumba" id="P25976"/>
<dbReference type="AGR" id="MGI:98512"/>
<dbReference type="MGI" id="MGI:98512">
    <property type="gene designation" value="Ubtf"/>
</dbReference>
<dbReference type="eggNOG" id="KOG0381">
    <property type="taxonomic scope" value="Eukaryota"/>
</dbReference>
<dbReference type="InParanoid" id="P25976"/>
<dbReference type="PhylomeDB" id="P25976"/>
<dbReference type="Reactome" id="R-MMU-73728">
    <property type="pathway name" value="RNA Polymerase I Promoter Opening"/>
</dbReference>
<dbReference type="Reactome" id="R-MMU-73762">
    <property type="pathway name" value="RNA Polymerase I Transcription Initiation"/>
</dbReference>
<dbReference type="Reactome" id="R-MMU-73772">
    <property type="pathway name" value="RNA Polymerase I Promoter Escape"/>
</dbReference>
<dbReference type="Reactome" id="R-MMU-73863">
    <property type="pathway name" value="RNA Polymerase I Transcription Termination"/>
</dbReference>
<dbReference type="ChiTaRS" id="Ubtf">
    <property type="organism name" value="mouse"/>
</dbReference>
<dbReference type="EvolutionaryTrace" id="P25976"/>
<dbReference type="PRO" id="PR:P25976"/>
<dbReference type="Proteomes" id="UP000000589">
    <property type="component" value="Unplaced"/>
</dbReference>
<dbReference type="RNAct" id="P25976">
    <property type="molecule type" value="protein"/>
</dbReference>
<dbReference type="GO" id="GO:0005730">
    <property type="term" value="C:nucleolus"/>
    <property type="evidence" value="ECO:0000314"/>
    <property type="project" value="MGI"/>
</dbReference>
<dbReference type="GO" id="GO:0003682">
    <property type="term" value="F:chromatin binding"/>
    <property type="evidence" value="ECO:0000250"/>
    <property type="project" value="UniProtKB"/>
</dbReference>
<dbReference type="GO" id="GO:0003677">
    <property type="term" value="F:DNA binding"/>
    <property type="evidence" value="ECO:0007669"/>
    <property type="project" value="UniProtKB-KW"/>
</dbReference>
<dbReference type="GO" id="GO:1990830">
    <property type="term" value="P:cellular response to leukemia inhibitory factor"/>
    <property type="evidence" value="ECO:0000270"/>
    <property type="project" value="MGI"/>
</dbReference>
<dbReference type="GO" id="GO:0045943">
    <property type="term" value="P:positive regulation of transcription by RNA polymerase I"/>
    <property type="evidence" value="ECO:0000314"/>
    <property type="project" value="UniProtKB"/>
</dbReference>
<dbReference type="GO" id="GO:0000183">
    <property type="term" value="P:rDNA heterochromatin formation"/>
    <property type="evidence" value="ECO:0000315"/>
    <property type="project" value="MGI"/>
</dbReference>
<dbReference type="GO" id="GO:0006362">
    <property type="term" value="P:transcription elongation by RNA polymerase I"/>
    <property type="evidence" value="ECO:0000314"/>
    <property type="project" value="MGI"/>
</dbReference>
<dbReference type="GO" id="GO:0006361">
    <property type="term" value="P:transcription initiation at RNA polymerase I promoter"/>
    <property type="evidence" value="ECO:0000250"/>
    <property type="project" value="UniProtKB"/>
</dbReference>
<dbReference type="CDD" id="cd21998">
    <property type="entry name" value="HMG-box_UBF1_rpt1-like"/>
    <property type="match status" value="1"/>
</dbReference>
<dbReference type="CDD" id="cd21999">
    <property type="entry name" value="HMG-box_UBF1_rpt2"/>
    <property type="match status" value="1"/>
</dbReference>
<dbReference type="CDD" id="cd22000">
    <property type="entry name" value="HMG-box_UBF1_rpt3"/>
    <property type="match status" value="1"/>
</dbReference>
<dbReference type="CDD" id="cd22001">
    <property type="entry name" value="HMG-box_UBF1_rpt4"/>
    <property type="match status" value="1"/>
</dbReference>
<dbReference type="CDD" id="cd22002">
    <property type="entry name" value="HMG-box_UBF1_rpt5"/>
    <property type="match status" value="1"/>
</dbReference>
<dbReference type="CDD" id="cd22003">
    <property type="entry name" value="HMG-box_UBF1_rpt6-like"/>
    <property type="match status" value="1"/>
</dbReference>
<dbReference type="FunFam" id="1.10.30.10:FF:000021">
    <property type="entry name" value="nucleolar transcription factor 1 isoform X1"/>
    <property type="match status" value="1"/>
</dbReference>
<dbReference type="FunFam" id="1.10.30.10:FF:000033">
    <property type="entry name" value="nucleolar transcription factor 1 isoform X1"/>
    <property type="match status" value="1"/>
</dbReference>
<dbReference type="FunFam" id="1.10.30.10:FF:000019">
    <property type="entry name" value="nucleolar transcription factor 1 isoform X2"/>
    <property type="match status" value="1"/>
</dbReference>
<dbReference type="FunFam" id="1.10.30.10:FF:000022">
    <property type="entry name" value="nucleolar transcription factor 1 isoform X2"/>
    <property type="match status" value="1"/>
</dbReference>
<dbReference type="FunFam" id="1.10.30.10:FF:000023">
    <property type="entry name" value="nucleolar transcription factor 1 isoform X2"/>
    <property type="match status" value="1"/>
</dbReference>
<dbReference type="FunFam" id="1.10.30.10:FF:000029">
    <property type="entry name" value="nucleolar transcription factor 1 isoform X2"/>
    <property type="match status" value="1"/>
</dbReference>
<dbReference type="Gene3D" id="1.10.30.10">
    <property type="entry name" value="High mobility group box domain"/>
    <property type="match status" value="6"/>
</dbReference>
<dbReference type="InterPro" id="IPR029215">
    <property type="entry name" value="HMG_box_5"/>
</dbReference>
<dbReference type="InterPro" id="IPR009071">
    <property type="entry name" value="HMG_box_dom"/>
</dbReference>
<dbReference type="InterPro" id="IPR036910">
    <property type="entry name" value="HMG_box_dom_sf"/>
</dbReference>
<dbReference type="InterPro" id="IPR051762">
    <property type="entry name" value="UBF1"/>
</dbReference>
<dbReference type="PANTHER" id="PTHR46318:SF4">
    <property type="entry name" value="NUCLEOLAR TRANSCRIPTION FACTOR 1"/>
    <property type="match status" value="1"/>
</dbReference>
<dbReference type="PANTHER" id="PTHR46318">
    <property type="entry name" value="UPSTREAM BINDING TRANSCRIPTION FACTOR"/>
    <property type="match status" value="1"/>
</dbReference>
<dbReference type="Pfam" id="PF00505">
    <property type="entry name" value="HMG_box"/>
    <property type="match status" value="3"/>
</dbReference>
<dbReference type="Pfam" id="PF09011">
    <property type="entry name" value="HMG_box_2"/>
    <property type="match status" value="1"/>
</dbReference>
<dbReference type="Pfam" id="PF14887">
    <property type="entry name" value="HMG_box_5"/>
    <property type="match status" value="1"/>
</dbReference>
<dbReference type="SMART" id="SM00398">
    <property type="entry name" value="HMG"/>
    <property type="match status" value="6"/>
</dbReference>
<dbReference type="SUPFAM" id="SSF47095">
    <property type="entry name" value="HMG-box"/>
    <property type="match status" value="6"/>
</dbReference>
<dbReference type="PROSITE" id="PS50118">
    <property type="entry name" value="HMG_BOX_2"/>
    <property type="match status" value="6"/>
</dbReference>
<reference key="1">
    <citation type="journal article" date="1991" name="Nucleic Acids Res.">
        <title>Cloning and structural analysis of cDNA and the gene for mouse transcription factor UBF.</title>
        <authorList>
            <person name="Hisatake K."/>
            <person name="Nishimura T."/>
            <person name="Maeda Y."/>
            <person name="Hanada K."/>
            <person name="Song C.Z."/>
            <person name="Muramatsu M."/>
        </authorList>
    </citation>
    <scope>NUCLEOTIDE SEQUENCE [MRNA] (ISOFORMS UBF1 AND UBF2)</scope>
    <source>
        <strain>C3H/He</strain>
    </source>
</reference>
<reference key="2">
    <citation type="journal article" date="2004" name="Proc. Natl. Acad. Sci. U.S.A.">
        <title>Control of cell size through phosphorylation of upstream binding factor 1 by nuclear phosphatidylinositol 3-kinase.</title>
        <authorList>
            <person name="Drakas R."/>
            <person name="Tu X."/>
            <person name="Baserga R."/>
        </authorList>
    </citation>
    <scope>INTERACTION WITH IRS1 AND PIK3CA</scope>
</reference>
<reference key="3">
    <citation type="journal article" date="2007" name="Am. J. Physiol.">
        <title>Mass spectrometric identification of phosphorylation sites of rRNA transcription factor upstream binding factor.</title>
        <authorList>
            <person name="Lin C.H."/>
            <person name="Platt M.D."/>
            <person name="Ficarro S.B."/>
            <person name="Hoofnagle M.H."/>
            <person name="Shabanowitz J."/>
            <person name="Comai L."/>
            <person name="Hunt D.F."/>
            <person name="Owens G.K."/>
        </authorList>
    </citation>
    <scope>PHOSPHORYLATION AT SER-273; SER-336; SER-364; SER-389; SER-412; SER-433; SER-484; SER-546; SER-584 AND SER-638</scope>
</reference>
<reference key="4">
    <citation type="journal article" date="2010" name="Cell">
        <title>A tissue-specific atlas of mouse protein phosphorylation and expression.</title>
        <authorList>
            <person name="Huttlin E.L."/>
            <person name="Jedrychowski M.P."/>
            <person name="Elias J.E."/>
            <person name="Goswami T."/>
            <person name="Rad R."/>
            <person name="Beausoleil S.A."/>
            <person name="Villen J."/>
            <person name="Haas W."/>
            <person name="Sowa M.E."/>
            <person name="Gygi S.P."/>
        </authorList>
    </citation>
    <scope>PHOSPHORYLATION [LARGE SCALE ANALYSIS] AT THR-201 AND SER-484</scope>
    <scope>IDENTIFICATION BY MASS SPECTROMETRY [LARGE SCALE ANALYSIS]</scope>
    <source>
        <tissue>Brain</tissue>
        <tissue>Lung</tissue>
        <tissue>Spleen</tissue>
    </source>
</reference>
<reference key="5">
    <citation type="journal article" date="2010" name="EMBO J.">
        <title>Chromatin association and regulation of rDNA transcription by the Ras-family protein RasL11a.</title>
        <authorList>
            <person name="Pistoni M."/>
            <person name="Verrecchia A."/>
            <person name="Doni M."/>
            <person name="Guccione E."/>
            <person name="Amati B."/>
        </authorList>
    </citation>
    <scope>FUNCTION</scope>
    <scope>SUBCELLULAR LOCATION</scope>
    <scope>INTERACTION WITH RASL11A</scope>
</reference>
<reference key="6">
    <citation type="journal article" date="2011" name="Mol. Cell. Biol.">
        <title>Identification of DHX33 as a mediator of rRNA synthesis and cell growth.</title>
        <authorList>
            <person name="Zhang Y."/>
            <person name="Forys J.T."/>
            <person name="Miceli A.P."/>
            <person name="Gwinn A.S."/>
            <person name="Weber J.D."/>
        </authorList>
    </citation>
    <scope>INTERACTION WITH DHX33</scope>
</reference>
<reference key="7">
    <citation type="submission" date="2004-11" db="PDB data bank">
        <title>Solution structure of the 3rd, 4th and 6th HMG-box of mouse UBF1.</title>
        <authorList>
            <consortium name="RIKEN structural genomics initiative (RSGI)"/>
        </authorList>
    </citation>
    <scope>STRUCTURE BY NMR OF 288-654</scope>
</reference>
<proteinExistence type="evidence at protein level"/>
<organism>
    <name type="scientific">Mus musculus</name>
    <name type="common">Mouse</name>
    <dbReference type="NCBI Taxonomy" id="10090"/>
    <lineage>
        <taxon>Eukaryota</taxon>
        <taxon>Metazoa</taxon>
        <taxon>Chordata</taxon>
        <taxon>Craniata</taxon>
        <taxon>Vertebrata</taxon>
        <taxon>Euteleostomi</taxon>
        <taxon>Mammalia</taxon>
        <taxon>Eutheria</taxon>
        <taxon>Euarchontoglires</taxon>
        <taxon>Glires</taxon>
        <taxon>Rodentia</taxon>
        <taxon>Myomorpha</taxon>
        <taxon>Muroidea</taxon>
        <taxon>Muridae</taxon>
        <taxon>Murinae</taxon>
        <taxon>Mus</taxon>
        <taxon>Mus</taxon>
    </lineage>
</organism>
<feature type="chain" id="PRO_0000048626" description="Nucleolar transcription factor 1">
    <location>
        <begin position="1"/>
        <end position="765"/>
    </location>
</feature>
<feature type="DNA-binding region" description="HMG box 1" evidence="3">
    <location>
        <begin position="112"/>
        <end position="180"/>
    </location>
</feature>
<feature type="DNA-binding region" description="HMG box 2" evidence="3">
    <location>
        <begin position="196"/>
        <end position="264"/>
    </location>
</feature>
<feature type="DNA-binding region" description="HMG box 3" evidence="3">
    <location>
        <begin position="298"/>
        <end position="362"/>
    </location>
</feature>
<feature type="DNA-binding region" description="HMG box 4" evidence="3">
    <location>
        <begin position="407"/>
        <end position="475"/>
    </location>
</feature>
<feature type="DNA-binding region" description="HMG box 5" evidence="3">
    <location>
        <begin position="482"/>
        <end position="549"/>
    </location>
</feature>
<feature type="DNA-binding region" description="HMG box 6" evidence="3">
    <location>
        <begin position="568"/>
        <end position="634"/>
    </location>
</feature>
<feature type="region of interest" description="Disordered" evidence="4">
    <location>
        <begin position="1"/>
        <end position="21"/>
    </location>
</feature>
<feature type="region of interest" description="Disordered" evidence="4">
    <location>
        <begin position="370"/>
        <end position="411"/>
    </location>
</feature>
<feature type="region of interest" description="Disordered" evidence="4">
    <location>
        <begin position="456"/>
        <end position="487"/>
    </location>
</feature>
<feature type="region of interest" description="Disordered" evidence="4">
    <location>
        <begin position="546"/>
        <end position="576"/>
    </location>
</feature>
<feature type="region of interest" description="Disordered" evidence="4">
    <location>
        <begin position="649"/>
        <end position="765"/>
    </location>
</feature>
<feature type="compositionally biased region" description="Basic and acidic residues" evidence="4">
    <location>
        <begin position="370"/>
        <end position="379"/>
    </location>
</feature>
<feature type="compositionally biased region" description="Basic and acidic residues" evidence="4">
    <location>
        <begin position="457"/>
        <end position="487"/>
    </location>
</feature>
<feature type="compositionally biased region" description="Polar residues" evidence="4">
    <location>
        <begin position="664"/>
        <end position="674"/>
    </location>
</feature>
<feature type="compositionally biased region" description="Acidic residues" evidence="4">
    <location>
        <begin position="677"/>
        <end position="746"/>
    </location>
</feature>
<feature type="compositionally biased region" description="Low complexity" evidence="4">
    <location>
        <begin position="747"/>
        <end position="765"/>
    </location>
</feature>
<feature type="modified residue" description="N-acetylmethionine" evidence="1">
    <location>
        <position position="1"/>
    </location>
</feature>
<feature type="modified residue" description="Phosphothreonine" evidence="10">
    <location>
        <position position="201"/>
    </location>
</feature>
<feature type="modified residue" description="Phosphoserine" evidence="6">
    <location>
        <position position="273"/>
    </location>
</feature>
<feature type="modified residue" description="Phosphoserine" evidence="6">
    <location>
        <position position="336"/>
    </location>
</feature>
<feature type="modified residue" description="Phosphoserine" evidence="6">
    <location>
        <position position="364"/>
    </location>
</feature>
<feature type="modified residue" description="Phosphoserine" evidence="6">
    <location>
        <position position="389"/>
    </location>
</feature>
<feature type="modified residue" description="Phosphoserine" evidence="6">
    <location>
        <position position="412"/>
    </location>
</feature>
<feature type="modified residue" description="Phosphoserine" evidence="6">
    <location>
        <position position="433"/>
    </location>
</feature>
<feature type="modified residue" description="Phosphoserine" evidence="1">
    <location>
        <position position="435"/>
    </location>
</feature>
<feature type="modified residue" description="Phosphoserine" evidence="6 10">
    <location>
        <position position="484"/>
    </location>
</feature>
<feature type="modified residue" description="Phosphoserine" evidence="1">
    <location>
        <position position="495"/>
    </location>
</feature>
<feature type="modified residue" description="Phosphoserine" evidence="6">
    <location>
        <position position="546"/>
    </location>
</feature>
<feature type="modified residue" description="Phosphoserine" evidence="6">
    <location>
        <position position="584"/>
    </location>
</feature>
<feature type="modified residue" description="Phosphoserine" evidence="6">
    <location>
        <position position="638"/>
    </location>
</feature>
<feature type="splice variant" id="VSP_002194" description="In isoform UBF2." evidence="9">
    <location>
        <begin position="221"/>
        <end position="257"/>
    </location>
</feature>
<feature type="turn" evidence="12">
    <location>
        <begin position="293"/>
        <end position="295"/>
    </location>
</feature>
<feature type="helix" evidence="12">
    <location>
        <begin position="304"/>
        <end position="315"/>
    </location>
</feature>
<feature type="helix" evidence="12">
    <location>
        <begin position="321"/>
        <end position="334"/>
    </location>
</feature>
<feature type="helix" evidence="12">
    <location>
        <begin position="337"/>
        <end position="364"/>
    </location>
</feature>
<feature type="helix" evidence="12">
    <location>
        <begin position="367"/>
        <end position="374"/>
    </location>
</feature>
<feature type="turn" evidence="12">
    <location>
        <begin position="375"/>
        <end position="379"/>
    </location>
</feature>
<feature type="helix" evidence="13">
    <location>
        <begin position="413"/>
        <end position="420"/>
    </location>
</feature>
<feature type="helix" evidence="13">
    <location>
        <begin position="422"/>
        <end position="428"/>
    </location>
</feature>
<feature type="helix" evidence="13">
    <location>
        <begin position="434"/>
        <end position="447"/>
    </location>
</feature>
<feature type="helix" evidence="13">
    <location>
        <begin position="450"/>
        <end position="463"/>
    </location>
</feature>
<feature type="turn" evidence="13">
    <location>
        <begin position="464"/>
        <end position="467"/>
    </location>
</feature>
<feature type="strand" evidence="11">
    <location>
        <begin position="572"/>
        <end position="574"/>
    </location>
</feature>
<feature type="helix" evidence="11">
    <location>
        <begin position="575"/>
        <end position="585"/>
    </location>
</feature>
<feature type="turn" evidence="11">
    <location>
        <begin position="587"/>
        <end position="590"/>
    </location>
</feature>
<feature type="helix" evidence="11">
    <location>
        <begin position="593"/>
        <end position="604"/>
    </location>
</feature>
<feature type="helix" evidence="11">
    <location>
        <begin position="609"/>
        <end position="636"/>
    </location>
</feature>
<feature type="helix" evidence="11">
    <location>
        <begin position="641"/>
        <end position="651"/>
    </location>
</feature>
<name>UBF1_MOUSE</name>
<comment type="function">
    <text evidence="7">Recognizes the ribosomal RNA gene promoter and activates transcription mediated by RNA polymerase I through cooperative interactions with the transcription factor SL1/TIF-IB complex. It binds specifically to the upstream control element.</text>
</comment>
<comment type="subunit">
    <text evidence="1 2 5 7 8">Homodimer (By similarity). Part of Pol I pre-initiation complex (PIC), in which Pol I core assembles with RRN3 and promoter-bound UTBF and SL1/TIF-IB complex (By similarity). Interacts with TOP2A in the context of Pol I complex (By similarity). Interacts with TBP (By similarity). Interacts with TAF1A (By similarity). Interacts with RASL11A (PubMed:20168301). Binds to IRS1 and PIK3CA (PubMed:15197263). Interacts with DHX33 (PubMed:21930779). Interacts with PHF6 (By similarity). Interacts with CEBPA (isoform 1 and isoform 4) (By similarity). Interacts with DDX11 (By similarity). Interacts with NOP53 (By similarity). Interacts with ALKBH2.</text>
</comment>
<comment type="interaction">
    <interactant intactId="EBI-7364139">
        <id>P25976</id>
    </interactant>
    <interactant intactId="EBI-903354">
        <id>Q08775</id>
        <label>Runx2</label>
    </interactant>
    <organismsDiffer>false</organismsDiffer>
    <experiments>4</experiments>
</comment>
<comment type="subcellular location">
    <subcellularLocation>
        <location evidence="7">Nucleus</location>
        <location evidence="7">Nucleolus</location>
    </subcellularLocation>
</comment>
<comment type="alternative products">
    <event type="alternative splicing"/>
    <isoform>
        <id>P25976-1</id>
        <name>UBF1</name>
        <name>Long</name>
        <sequence type="displayed"/>
    </isoform>
    <isoform>
        <id>P25976-2</id>
        <name>UBF2</name>
        <name>Short</name>
        <sequence type="described" ref="VSP_002194"/>
    </isoform>
</comment>
<comment type="PTM">
    <text evidence="6">Phosphorylated and activated by PIK3CA.</text>
</comment>
<gene>
    <name type="primary">Ubtf</name>
    <name type="synonym">Tcfubf</name>
    <name type="synonym">Ubf-1</name>
    <name type="synonym">Ubf1</name>
</gene>
<keyword id="KW-0002">3D-structure</keyword>
<keyword id="KW-0007">Acetylation</keyword>
<keyword id="KW-0010">Activator</keyword>
<keyword id="KW-0025">Alternative splicing</keyword>
<keyword id="KW-0238">DNA-binding</keyword>
<keyword id="KW-0539">Nucleus</keyword>
<keyword id="KW-0597">Phosphoprotein</keyword>
<keyword id="KW-1185">Reference proteome</keyword>
<keyword id="KW-0677">Repeat</keyword>
<keyword id="KW-0804">Transcription</keyword>
<keyword id="KW-0805">Transcription regulation</keyword>
<evidence type="ECO:0000250" key="1">
    <source>
        <dbReference type="UniProtKB" id="P17480"/>
    </source>
</evidence>
<evidence type="ECO:0000250" key="2">
    <source>
        <dbReference type="UniProtKB" id="P25977"/>
    </source>
</evidence>
<evidence type="ECO:0000255" key="3">
    <source>
        <dbReference type="PROSITE-ProRule" id="PRU00267"/>
    </source>
</evidence>
<evidence type="ECO:0000256" key="4">
    <source>
        <dbReference type="SAM" id="MobiDB-lite"/>
    </source>
</evidence>
<evidence type="ECO:0000269" key="5">
    <source>
    </source>
</evidence>
<evidence type="ECO:0000269" key="6">
    <source>
    </source>
</evidence>
<evidence type="ECO:0000269" key="7">
    <source>
    </source>
</evidence>
<evidence type="ECO:0000269" key="8">
    <source>
    </source>
</evidence>
<evidence type="ECO:0000303" key="9">
    <source>
    </source>
</evidence>
<evidence type="ECO:0007744" key="10">
    <source>
    </source>
</evidence>
<evidence type="ECO:0007829" key="11">
    <source>
        <dbReference type="PDB" id="1V63"/>
    </source>
</evidence>
<evidence type="ECO:0007829" key="12">
    <source>
        <dbReference type="PDB" id="1V64"/>
    </source>
</evidence>
<evidence type="ECO:0007829" key="13">
    <source>
        <dbReference type="PDB" id="1WGF"/>
    </source>
</evidence>
<accession>P25976</accession>